<evidence type="ECO:0000250" key="1">
    <source>
        <dbReference type="UniProtKB" id="Q79PF4"/>
    </source>
</evidence>
<evidence type="ECO:0000255" key="2">
    <source>
        <dbReference type="HAMAP-Rule" id="MF_01836"/>
    </source>
</evidence>
<evidence type="ECO:0000269" key="3">
    <source>
    </source>
</evidence>
<evidence type="ECO:0000269" key="4">
    <source>
    </source>
</evidence>
<evidence type="ECO:0000269" key="5">
    <source>
    </source>
</evidence>
<evidence type="ECO:0000269" key="6">
    <source>
    </source>
</evidence>
<evidence type="ECO:0000269" key="7">
    <source>
    </source>
</evidence>
<evidence type="ECO:0000269" key="8">
    <source>
    </source>
</evidence>
<evidence type="ECO:0000269" key="9">
    <source>
    </source>
</evidence>
<evidence type="ECO:0000303" key="10">
    <source ref="1"/>
</evidence>
<evidence type="ECO:0000305" key="11"/>
<evidence type="ECO:0000305" key="12">
    <source>
    </source>
</evidence>
<evidence type="ECO:0000305" key="13">
    <source>
    </source>
</evidence>
<evidence type="ECO:0000312" key="14">
    <source>
        <dbReference type="EMBL" id="BAB85985.1"/>
    </source>
</evidence>
<evidence type="ECO:0000312" key="15">
    <source>
        <dbReference type="EMBL" id="BAC08035.1"/>
    </source>
</evidence>
<evidence type="ECO:0000312" key="16">
    <source>
        <dbReference type="PDB" id="7DY1"/>
    </source>
</evidence>
<evidence type="ECO:0007744" key="17">
    <source>
        <dbReference type="PDB" id="1SUY"/>
    </source>
</evidence>
<evidence type="ECO:0007744" key="18">
    <source>
        <dbReference type="PDB" id="1SV1"/>
    </source>
</evidence>
<evidence type="ECO:0007744" key="19">
    <source>
        <dbReference type="PDB" id="5JWO"/>
    </source>
</evidence>
<evidence type="ECO:0007744" key="20">
    <source>
        <dbReference type="PDB" id="5JWQ"/>
    </source>
</evidence>
<evidence type="ECO:0007744" key="21">
    <source>
        <dbReference type="PDB" id="5JWR"/>
    </source>
</evidence>
<evidence type="ECO:0007744" key="22">
    <source>
        <dbReference type="PDB" id="6X61"/>
    </source>
</evidence>
<evidence type="ECO:0007744" key="23">
    <source>
        <dbReference type="PDB" id="7DY1"/>
    </source>
</evidence>
<evidence type="ECO:0007829" key="24">
    <source>
        <dbReference type="PDB" id="1SUY"/>
    </source>
</evidence>
<evidence type="ECO:0007829" key="25">
    <source>
        <dbReference type="PDB" id="1SV1"/>
    </source>
</evidence>
<evidence type="ECO:0007829" key="26">
    <source>
        <dbReference type="PDB" id="4O0M"/>
    </source>
</evidence>
<evidence type="ECO:0007829" key="27">
    <source>
        <dbReference type="PDB" id="5JWO"/>
    </source>
</evidence>
<evidence type="ECO:0007829" key="28">
    <source>
        <dbReference type="PDB" id="5JWR"/>
    </source>
</evidence>
<evidence type="ECO:0007829" key="29">
    <source>
        <dbReference type="PDB" id="7DY1"/>
    </source>
</evidence>
<reference evidence="14" key="1">
    <citation type="submission" date="2001-09" db="EMBL/GenBank/DDBJ databases">
        <title>Circadian clock gene cluster kaiABC in Synechococcus elongatus.</title>
        <authorList>
            <person name="Uzumaki T."/>
            <person name="Hayashi F."/>
            <person name="Onai K."/>
            <person name="Ishiura M."/>
        </authorList>
    </citation>
    <scope>NUCLEOTIDE SEQUENCE [GENOMIC DNA]</scope>
    <source>
        <strain>NIES-2133 / IAM M-273 / BP-1</strain>
    </source>
</reference>
<reference evidence="15" key="2">
    <citation type="journal article" date="2002" name="DNA Res.">
        <title>Complete genome structure of the thermophilic cyanobacterium Thermosynechococcus elongatus BP-1.</title>
        <authorList>
            <person name="Nakamura Y."/>
            <person name="Kaneko T."/>
            <person name="Sato S."/>
            <person name="Ikeuchi M."/>
            <person name="Katoh H."/>
            <person name="Sasamoto S."/>
            <person name="Watanabe A."/>
            <person name="Iriguchi M."/>
            <person name="Kawashima K."/>
            <person name="Kimura T."/>
            <person name="Kishida Y."/>
            <person name="Kiyokawa C."/>
            <person name="Kohara M."/>
            <person name="Matsumoto M."/>
            <person name="Matsuno A."/>
            <person name="Nakazaki N."/>
            <person name="Shimpo S."/>
            <person name="Sugimoto M."/>
            <person name="Takeuchi C."/>
            <person name="Yamada M."/>
            <person name="Tabata S."/>
        </authorList>
    </citation>
    <scope>NUCLEOTIDE SEQUENCE [LARGE SCALE GENOMIC DNA]</scope>
    <source>
        <strain>NIES-2133 / IAM M-273 / BP-1</strain>
    </source>
</reference>
<reference key="3">
    <citation type="journal article" date="2003" name="Genes Cells">
        <title>ATP-induced hexameric ring structure of the cyanobacterial circadian clock protein KaiC.</title>
        <authorList>
            <person name="Hayashi F."/>
            <person name="Suzuki H."/>
            <person name="Iwase R."/>
            <person name="Uzumaki T."/>
            <person name="Miyake A."/>
            <person name="Shen J.-R."/>
            <person name="Imada K."/>
            <person name="Furukawa Y."/>
            <person name="Yonekura K."/>
            <person name="Namba K."/>
            <person name="Ishiura M."/>
        </authorList>
    </citation>
    <scope>BIOPHYSICOCHEMICAL PROPERTIES</scope>
    <scope>HEXAMERIZATION</scope>
    <scope>SUBUNIT</scope>
    <scope>ATP-BINDING</scope>
    <scope>MUTAGENESIS OF LYS-53 AND LYS-294</scope>
    <source>
        <strain>NIES-2133 / IAM M-273 / BP-1</strain>
    </source>
</reference>
<reference key="4">
    <citation type="journal article" date="2012" name="Genes Cells">
        <title>Phase-dependent generation and transmission of time information by the KaiABC circadian clock oscillator through SasA-KaiC interaction in cyanobacteria.</title>
        <authorList>
            <person name="Valencia S.J."/>
            <person name="Bitou K."/>
            <person name="Ishii K."/>
            <person name="Murakami R."/>
            <person name="Morishita M."/>
            <person name="Onai K."/>
            <person name="Furukawa Y."/>
            <person name="Imada K."/>
            <person name="Namba K."/>
            <person name="Ishiura M."/>
        </authorList>
    </citation>
    <scope>FUNCTION</scope>
    <scope>INTERACTION WITH SASA</scope>
    <scope>SUBUNIT</scope>
    <scope>DOMAIN</scope>
    <scope>MUTAGENESIS OF 318-GLU-GLU-319; 431-SER-THR-432; SER-431 AND THR-432</scope>
    <source>
        <strain>NIES-2133 / IAM M-273 / BP-1</strain>
    </source>
</reference>
<reference key="5">
    <citation type="journal article" date="2014" name="J. Mol. Biol.">
        <title>Cooperative KaiA-KaiB-KaiC interactions affect KaiB/SasA competition in the circadian clock of cyanobacteria.</title>
        <authorList>
            <person name="Tseng R."/>
            <person name="Chang Y.G."/>
            <person name="Bravo I."/>
            <person name="Latham R."/>
            <person name="Chaudhary A."/>
            <person name="Kuo N.W."/>
            <person name="Liwang A."/>
        </authorList>
    </citation>
    <scope>FUNCTION</scope>
    <scope>CATALYTIC ACTIVITY</scope>
    <scope>SUBUNIT</scope>
    <scope>DOMAIN</scope>
    <scope>PHOSPHORYLATION AT SER-431 AND THR-432</scope>
    <scope>MUTAGENESIS OF 116-GLN--ASP-123</scope>
    <source>
        <strain>NIES-2133 / IAM M-273 / BP-1</strain>
    </source>
</reference>
<reference key="6">
    <citation type="journal article" date="2015" name="Science">
        <title>Circadian rhythms. A protein fold switch joins the circadian oscillator to clock output in cyanobacteria.</title>
        <authorList>
            <person name="Chang Y.G."/>
            <person name="Cohen S.E."/>
            <person name="Phong C."/>
            <person name="Myers W.K."/>
            <person name="Kim Y.I."/>
            <person name="Tseng R."/>
            <person name="Lin J."/>
            <person name="Zhang L."/>
            <person name="Boyd J.S."/>
            <person name="Lee Y."/>
            <person name="Kang S."/>
            <person name="Lee D."/>
            <person name="Li S."/>
            <person name="Britt R.D."/>
            <person name="Rust M.J."/>
            <person name="Golden S.S."/>
            <person name="LiWang A."/>
        </authorList>
    </citation>
    <scope>SUBUNIT</scope>
    <scope>PHOSPHORYLATION</scope>
    <source>
        <strain>NIES-2133 / IAM M-273 / BP-1</strain>
    </source>
</reference>
<reference evidence="17 18" key="7">
    <citation type="journal article" date="2004" name="Proc. Natl. Acad. Sci. U.S.A.">
        <title>Structure of the C-terminal domain of the clock protein KaiA in complex with a KaiC-derived peptide: implications for KaiC regulation.</title>
        <authorList>
            <person name="Vakonakis I."/>
            <person name="LiWang A.C."/>
        </authorList>
    </citation>
    <scope>STRUCTURE BY NMR OF 488-518 IN COMPLEX WITH 180-283 OF KAIA</scope>
    <source>
        <strain>NIES-2133 / IAM M-273 / BP-1</strain>
    </source>
</reference>
<reference evidence="19 20 21" key="8">
    <citation type="journal article" date="2017" name="Science">
        <title>Structural basis of the day-night transition in a bacterial circadian clock.</title>
        <authorList>
            <person name="Tseng R."/>
            <person name="Goularte N.F."/>
            <person name="Chavan A."/>
            <person name="Luu J."/>
            <person name="Cohen S.E."/>
            <person name="Chang Y.G."/>
            <person name="Heisler J."/>
            <person name="Li S."/>
            <person name="Michael A.K."/>
            <person name="Tripathi S."/>
            <person name="Golden S.S."/>
            <person name="LiWang A."/>
            <person name="Partch C.L."/>
        </authorList>
    </citation>
    <scope>X-RAY CRYSTALLOGRAPHY (1.80 ANGSTROMS) OF 17-247 IN COMPLEX WITH KAIB</scope>
    <scope>X-RAY CRYSTALLOGRAPHY (2.61 ANGSTROMS) OF 17-247 IN KAIABC COMPLEX</scope>
    <scope>FUNCTION</scope>
    <scope>SUBUNIT</scope>
    <scope>DOMAIN</scope>
    <source>
        <strain>NIES-2133 / IAM M-273 / BP-1</strain>
    </source>
</reference>
<reference evidence="22" key="9">
    <citation type="journal article" date="2021" name="Science">
        <title>Reconstitution of an intact clock reveals mechanisms of circadian timekeeping.</title>
        <authorList>
            <person name="Chavan A.G."/>
            <person name="Swan J.A."/>
            <person name="Heisler J."/>
            <person name="Sancar C."/>
            <person name="Ernst D.C."/>
            <person name="Fang M."/>
            <person name="Palacios J.G."/>
            <person name="Spangler R.K."/>
            <person name="Bagshaw C.R."/>
            <person name="Tripathi S."/>
            <person name="Crosby P."/>
            <person name="Golden S.S."/>
            <person name="Partch C.L."/>
            <person name="LiWang A."/>
        </authorList>
    </citation>
    <scope>X-RAY CRYSTALLOGRAPHY (3.20 ANGSTROMS) OF 17-247 IN COMPLEX WITH SASA</scope>
    <scope>SUBUNIT</scope>
    <scope>PHOSPHORYLATION</scope>
    <scope>MUTAGENESIS OF ASP-121; PHE-122 AND ASP-123</scope>
    <source>
        <strain>NIES-2133 / IAM M-273 / BP-1</strain>
    </source>
</reference>
<reference evidence="23" key="10">
    <citation type="journal article" date="2022" name="Proc. Natl. Acad. Sci. U.S.A.">
        <title>Regulation mechanisms of the dual ATPase in KaiC.</title>
        <authorList>
            <person name="Furuike Y."/>
            <person name="Mukaiyama A."/>
            <person name="Koda S.I."/>
            <person name="Simon D."/>
            <person name="Ouyang D."/>
            <person name="Ito-Miwa K."/>
            <person name="Saito S."/>
            <person name="Yamashita E."/>
            <person name="Nishiwaki-Ohkawa T."/>
            <person name="Terauchi K."/>
            <person name="Kondo T."/>
            <person name="Akiyama S."/>
        </authorList>
    </citation>
    <scope>X-RAY CRYSTALLOGRAPHY (2.20 ANGSTROMS) IN COMPLEX WITH ATP AND MG(2+)</scope>
    <scope>FUNCTION</scope>
    <scope>PROBABLE ACTIVE SITES</scope>
    <scope>SUBUNIT</scope>
    <scope>DOMAIN</scope>
    <scope>PHOSPHORYLATION</scope>
    <scope>MUTAGENESIS OF GLU-318</scope>
</reference>
<keyword id="KW-0002">3D-structure</keyword>
<keyword id="KW-0067">ATP-binding</keyword>
<keyword id="KW-0090">Biological rhythms</keyword>
<keyword id="KW-0378">Hydrolase</keyword>
<keyword id="KW-0418">Kinase</keyword>
<keyword id="KW-0460">Magnesium</keyword>
<keyword id="KW-0479">Metal-binding</keyword>
<keyword id="KW-0547">Nucleotide-binding</keyword>
<keyword id="KW-0597">Phosphoprotein</keyword>
<keyword id="KW-1185">Reference proteome</keyword>
<keyword id="KW-0677">Repeat</keyword>
<keyword id="KW-0723">Serine/threonine-protein kinase</keyword>
<keyword id="KW-0804">Transcription</keyword>
<keyword id="KW-0805">Transcription regulation</keyword>
<keyword id="KW-0808">Transferase</keyword>
<feature type="chain" id="PRO_0000217779" description="Circadian clock oscillator protein KaiC">
    <location>
        <begin position="1"/>
        <end position="518"/>
    </location>
</feature>
<feature type="domain" description="KaiC 1" evidence="2 9">
    <location>
        <begin position="1"/>
        <end position="247"/>
    </location>
</feature>
<feature type="domain" description="KaiC 2" evidence="2 9">
    <location>
        <begin position="261"/>
        <end position="518"/>
    </location>
</feature>
<feature type="region of interest" description="B-loop, required to bind KaiB and SasA" evidence="5 8">
    <location>
        <begin position="116"/>
        <end position="123"/>
    </location>
</feature>
<feature type="region of interest" description="Linker" evidence="9">
    <location>
        <begin position="248"/>
        <end position="260"/>
    </location>
</feature>
<feature type="region of interest" description="A-loop, interacts with KaiA" evidence="1">
    <location>
        <begin position="488"/>
        <end position="497"/>
    </location>
</feature>
<feature type="active site" description="Proton acceptor in CI (KaiC 1)" evidence="13">
    <location>
        <position position="78"/>
    </location>
</feature>
<feature type="active site" description="Proton acceptor in CII (KaiC 2)" evidence="13">
    <location>
        <position position="318"/>
    </location>
</feature>
<feature type="binding site" evidence="16">
    <location>
        <position position="49"/>
    </location>
    <ligand>
        <name>ATP</name>
        <dbReference type="ChEBI" id="CHEBI:30616"/>
        <label>1</label>
        <note>ligand shared between homodimeric partners</note>
    </ligand>
</feature>
<feature type="binding site" evidence="2 16">
    <location>
        <position position="50"/>
    </location>
    <ligand>
        <name>ATP</name>
        <dbReference type="ChEBI" id="CHEBI:30616"/>
        <label>1</label>
        <note>ligand shared between homodimeric partners</note>
    </ligand>
</feature>
<feature type="binding site" evidence="2 16">
    <location>
        <position position="51"/>
    </location>
    <ligand>
        <name>ATP</name>
        <dbReference type="ChEBI" id="CHEBI:30616"/>
        <label>1</label>
        <note>ligand shared between homodimeric partners</note>
    </ligand>
</feature>
<feature type="binding site" evidence="2 16">
    <location>
        <position position="52"/>
    </location>
    <ligand>
        <name>ATP</name>
        <dbReference type="ChEBI" id="CHEBI:30616"/>
        <label>1</label>
        <note>ligand shared between homodimeric partners</note>
    </ligand>
</feature>
<feature type="binding site" evidence="2 16">
    <location>
        <position position="53"/>
    </location>
    <ligand>
        <name>ATP</name>
        <dbReference type="ChEBI" id="CHEBI:30616"/>
        <label>1</label>
        <note>ligand shared between homodimeric partners</note>
    </ligand>
</feature>
<feature type="binding site" evidence="2 16">
    <location>
        <position position="54"/>
    </location>
    <ligand>
        <name>ATP</name>
        <dbReference type="ChEBI" id="CHEBI:30616"/>
        <label>1</label>
        <note>ligand shared between homodimeric partners</note>
    </ligand>
</feature>
<feature type="binding site" evidence="2">
    <location>
        <position position="54"/>
    </location>
    <ligand>
        <name>Mg(2+)</name>
        <dbReference type="ChEBI" id="CHEBI:18420"/>
        <label>1</label>
    </ligand>
</feature>
<feature type="binding site" evidence="2 16">
    <location>
        <position position="55"/>
    </location>
    <ligand>
        <name>ATP</name>
        <dbReference type="ChEBI" id="CHEBI:30616"/>
        <label>1</label>
        <note>ligand shared between homodimeric partners</note>
    </ligand>
</feature>
<feature type="binding site" evidence="2 16">
    <location>
        <position position="90"/>
    </location>
    <ligand>
        <name>ATP</name>
        <dbReference type="ChEBI" id="CHEBI:30616"/>
        <label>1</label>
        <note>ligand shared between homodimeric partners</note>
    </ligand>
</feature>
<feature type="binding site" evidence="2 16">
    <location>
        <position position="225"/>
    </location>
    <ligand>
        <name>ATP</name>
        <dbReference type="ChEBI" id="CHEBI:30616"/>
        <label>1</label>
        <note>ligand shared between homodimeric partners</note>
    </ligand>
</feature>
<feature type="binding site" evidence="2 16">
    <location>
        <position position="226"/>
    </location>
    <ligand>
        <name>ATP</name>
        <dbReference type="ChEBI" id="CHEBI:30616"/>
        <label>1</label>
        <note>ligand shared between homodimeric partners</note>
    </ligand>
</feature>
<feature type="binding site" evidence="2 16">
    <location>
        <position position="227"/>
    </location>
    <ligand>
        <name>ATP</name>
        <dbReference type="ChEBI" id="CHEBI:30616"/>
        <label>1</label>
        <note>ligand shared between homodimeric partners</note>
    </ligand>
</feature>
<feature type="binding site" evidence="2">
    <location>
        <position position="229"/>
    </location>
    <ligand>
        <name>ATP</name>
        <dbReference type="ChEBI" id="CHEBI:30616"/>
        <label>1</label>
        <note>ligand shared between homodimeric partners</note>
    </ligand>
</feature>
<feature type="binding site" evidence="2 16">
    <location>
        <position position="231"/>
    </location>
    <ligand>
        <name>ATP</name>
        <dbReference type="ChEBI" id="CHEBI:30616"/>
        <label>1</label>
        <note>ligand shared between homodimeric partners</note>
    </ligand>
</feature>
<feature type="binding site" evidence="2 16">
    <location>
        <position position="290"/>
    </location>
    <ligand>
        <name>ATP</name>
        <dbReference type="ChEBI" id="CHEBI:30616"/>
        <label>2</label>
        <note>ligand shared between homodimeric partners</note>
    </ligand>
</feature>
<feature type="binding site" evidence="2 16">
    <location>
        <position position="291"/>
    </location>
    <ligand>
        <name>ATP</name>
        <dbReference type="ChEBI" id="CHEBI:30616"/>
        <label>2</label>
        <note>ligand shared between homodimeric partners</note>
    </ligand>
</feature>
<feature type="binding site" evidence="2 16">
    <location>
        <position position="292"/>
    </location>
    <ligand>
        <name>ATP</name>
        <dbReference type="ChEBI" id="CHEBI:30616"/>
        <label>2</label>
        <note>ligand shared between homodimeric partners</note>
    </ligand>
</feature>
<feature type="binding site" evidence="2 16">
    <location>
        <position position="293"/>
    </location>
    <ligand>
        <name>ATP</name>
        <dbReference type="ChEBI" id="CHEBI:30616"/>
        <label>2</label>
        <note>ligand shared between homodimeric partners</note>
    </ligand>
</feature>
<feature type="binding site" evidence="2 16">
    <location>
        <position position="294"/>
    </location>
    <ligand>
        <name>ATP</name>
        <dbReference type="ChEBI" id="CHEBI:30616"/>
        <label>2</label>
        <note>ligand shared between homodimeric partners</note>
    </ligand>
</feature>
<feature type="binding site" evidence="2 16">
    <location>
        <position position="295"/>
    </location>
    <ligand>
        <name>ATP</name>
        <dbReference type="ChEBI" id="CHEBI:30616"/>
        <label>2</label>
        <note>ligand shared between homodimeric partners</note>
    </ligand>
</feature>
<feature type="binding site" evidence="2 16">
    <location>
        <position position="295"/>
    </location>
    <ligand>
        <name>Mg(2+)</name>
        <dbReference type="ChEBI" id="CHEBI:18420"/>
        <label>2</label>
    </ligand>
</feature>
<feature type="binding site" evidence="2 16">
    <location>
        <position position="296"/>
    </location>
    <ligand>
        <name>ATP</name>
        <dbReference type="ChEBI" id="CHEBI:30616"/>
        <label>2</label>
        <note>ligand shared between homodimeric partners</note>
    </ligand>
</feature>
<feature type="binding site" evidence="2">
    <location>
        <position position="318"/>
    </location>
    <ligand>
        <name>Mg(2+)</name>
        <dbReference type="ChEBI" id="CHEBI:18420"/>
        <label>2</label>
    </ligand>
</feature>
<feature type="binding site" evidence="2">
    <location>
        <position position="331"/>
    </location>
    <ligand>
        <name>ATP</name>
        <dbReference type="ChEBI" id="CHEBI:30616"/>
        <label>2</label>
        <note>ligand shared between homodimeric partners</note>
    </ligand>
</feature>
<feature type="binding site" evidence="2 16">
    <location>
        <position position="451"/>
    </location>
    <ligand>
        <name>ATP</name>
        <dbReference type="ChEBI" id="CHEBI:30616"/>
        <label>2</label>
        <note>ligand shared between homodimeric partners</note>
    </ligand>
</feature>
<feature type="binding site" evidence="2 16">
    <location>
        <position position="457"/>
    </location>
    <ligand>
        <name>ATP</name>
        <dbReference type="ChEBI" id="CHEBI:30616"/>
        <label>2</label>
        <note>ligand shared between homodimeric partners</note>
    </ligand>
</feature>
<feature type="binding site" evidence="2 16">
    <location>
        <position position="458"/>
    </location>
    <ligand>
        <name>ATP</name>
        <dbReference type="ChEBI" id="CHEBI:30616"/>
        <label>2</label>
        <note>ligand shared between homodimeric partners</note>
    </ligand>
</feature>
<feature type="binding site" evidence="2 16">
    <location>
        <position position="459"/>
    </location>
    <ligand>
        <name>ATP</name>
        <dbReference type="ChEBI" id="CHEBI:30616"/>
        <label>2</label>
        <note>ligand shared between homodimeric partners</note>
    </ligand>
</feature>
<feature type="binding site" evidence="2">
    <location>
        <position position="461"/>
    </location>
    <ligand>
        <name>ATP</name>
        <dbReference type="ChEBI" id="CHEBI:30616"/>
        <label>2</label>
        <note>ligand shared between homodimeric partners</note>
    </ligand>
</feature>
<feature type="binding site" evidence="2">
    <location>
        <position position="463"/>
    </location>
    <ligand>
        <name>ATP</name>
        <dbReference type="ChEBI" id="CHEBI:30616"/>
        <label>2</label>
        <note>ligand shared between homodimeric partners</note>
    </ligand>
</feature>
<feature type="binding site" evidence="2">
    <location>
        <position position="465"/>
    </location>
    <ligand>
        <name>ATP</name>
        <dbReference type="ChEBI" id="CHEBI:30616"/>
        <label>2</label>
        <note>ligand shared between homodimeric partners</note>
    </ligand>
</feature>
<feature type="modified residue" description="Phosphoserine; by autocatalysis" evidence="2 5">
    <location>
        <position position="431"/>
    </location>
</feature>
<feature type="modified residue" description="Phosphothreonine; by autocatalysis" evidence="2 5">
    <location>
        <position position="432"/>
    </location>
</feature>
<feature type="mutagenesis site" description="KM for ATP is 13 uM, reduced hexamerization. KM for ATP is 3.4 mM, very little hexamerization; when associated with H-294." evidence="3">
    <original>K</original>
    <variation>H</variation>
    <location>
        <position position="53"/>
    </location>
</feature>
<feature type="mutagenesis site" description="No longer binds KaiB or SasA (in a 1-247 residue construct)." evidence="5">
    <location>
        <begin position="116"/>
        <end position="123"/>
    </location>
</feature>
<feature type="mutagenesis site" description="No change in KaiB binding, slight decrease in SasA binding." evidence="8">
    <original>D</original>
    <variation>A</variation>
    <location>
        <position position="121"/>
    </location>
</feature>
<feature type="mutagenesis site" description="Very little KaiB binding, decreased binding of SasA." evidence="8">
    <original>F</original>
    <variation>A</variation>
    <location>
        <position position="122"/>
    </location>
</feature>
<feature type="mutagenesis site" description="Very little KaiB binding, decreased binding of SasA." evidence="8">
    <original>D</original>
    <variation>A</variation>
    <location>
        <position position="123"/>
    </location>
</feature>
<feature type="mutagenesis site" description="KM for ATP is 3.6 uM, reduced hexamerization. KM for ATP is 3.4 mM, very little hexamerization; when associated with H-53." evidence="3">
    <original>K</original>
    <variation>H</variation>
    <location>
        <position position="294"/>
    </location>
</feature>
<feature type="mutagenesis site" description="Very little stimulation of SasA autophosphorylation." evidence="4">
    <original>EE</original>
    <variation>QQ</variation>
    <location>
        <begin position="318"/>
        <end position="319"/>
    </location>
</feature>
<feature type="mutagenesis site" description="Inactivates the CII domain ATPase, KaiC hydrolyzes 16 ATP/day." evidence="9">
    <original>E</original>
    <variation>Q</variation>
    <location>
        <position position="318"/>
    </location>
</feature>
<feature type="mutagenesis site" description="2.6-fold decrease in SasA autophosphorylation." evidence="4">
    <original>ST</original>
    <variation>AA</variation>
    <location>
        <begin position="431"/>
        <end position="432"/>
    </location>
</feature>
<feature type="mutagenesis site" description="4.8-fold decrease in SasA autophosphorylation." evidence="4">
    <original>ST</original>
    <variation>AD</variation>
    <location>
        <begin position="431"/>
        <end position="432"/>
    </location>
</feature>
<feature type="mutagenesis site" description="1.8-fold decrease in SasA autophosphorylation." evidence="4">
    <original>ST</original>
    <variation>DA</variation>
    <location>
        <begin position="431"/>
        <end position="432"/>
    </location>
</feature>
<feature type="mutagenesis site" description="2.4-fold increase in SasA autophosphorylation, simulates fully phosphorylated protein." evidence="4">
    <original>ST</original>
    <variation>DD</variation>
    <location>
        <begin position="431"/>
        <end position="432"/>
    </location>
</feature>
<feature type="mutagenesis site" description="1.5-fold decrease in SasA autophosphorylation." evidence="4">
    <original>S</original>
    <variation>D</variation>
    <location>
        <position position="431"/>
    </location>
</feature>
<feature type="mutagenesis site" description="1.4-fold decrease in SasA autophosphorylation." evidence="4">
    <original>T</original>
    <variation>D</variation>
    <location>
        <position position="432"/>
    </location>
</feature>
<feature type="helix" evidence="27">
    <location>
        <begin position="29"/>
        <end position="32"/>
    </location>
</feature>
<feature type="strand" evidence="27">
    <location>
        <begin position="35"/>
        <end position="38"/>
    </location>
</feature>
<feature type="strand" evidence="27">
    <location>
        <begin position="41"/>
        <end position="46"/>
    </location>
</feature>
<feature type="helix" evidence="27">
    <location>
        <begin position="53"/>
        <end position="68"/>
    </location>
</feature>
<feature type="strand" evidence="27">
    <location>
        <begin position="72"/>
        <end position="79"/>
    </location>
</feature>
<feature type="helix" evidence="27">
    <location>
        <begin position="81"/>
        <end position="88"/>
    </location>
</feature>
<feature type="helix" evidence="27">
    <location>
        <begin position="89"/>
        <end position="91"/>
    </location>
</feature>
<feature type="helix" evidence="27">
    <location>
        <begin position="95"/>
        <end position="100"/>
    </location>
</feature>
<feature type="strand" evidence="27">
    <location>
        <begin position="103"/>
        <end position="108"/>
    </location>
</feature>
<feature type="strand" evidence="28">
    <location>
        <begin position="116"/>
        <end position="118"/>
    </location>
</feature>
<feature type="strand" evidence="26">
    <location>
        <begin position="119"/>
        <end position="122"/>
    </location>
</feature>
<feature type="helix" evidence="27">
    <location>
        <begin position="125"/>
        <end position="138"/>
    </location>
</feature>
<feature type="strand" evidence="27">
    <location>
        <begin position="142"/>
        <end position="146"/>
    </location>
</feature>
<feature type="helix" evidence="27">
    <location>
        <begin position="148"/>
        <end position="154"/>
    </location>
</feature>
<feature type="helix" evidence="27">
    <location>
        <begin position="158"/>
        <end position="174"/>
    </location>
</feature>
<feature type="strand" evidence="27">
    <location>
        <begin position="178"/>
        <end position="183"/>
    </location>
</feature>
<feature type="strand" evidence="29">
    <location>
        <begin position="188"/>
        <end position="190"/>
    </location>
</feature>
<feature type="strand" evidence="29">
    <location>
        <begin position="192"/>
        <end position="196"/>
    </location>
</feature>
<feature type="helix" evidence="29">
    <location>
        <begin position="198"/>
        <end position="201"/>
    </location>
</feature>
<feature type="strand" evidence="27">
    <location>
        <begin position="205"/>
        <end position="213"/>
    </location>
</feature>
<feature type="strand" evidence="27">
    <location>
        <begin position="216"/>
        <end position="225"/>
    </location>
</feature>
<feature type="strand" evidence="27">
    <location>
        <begin position="234"/>
        <end position="246"/>
    </location>
</feature>
<feature type="turn" evidence="26">
    <location>
        <begin position="249"/>
        <end position="251"/>
    </location>
</feature>
<feature type="helix" evidence="29">
    <location>
        <begin position="268"/>
        <end position="273"/>
    </location>
</feature>
<feature type="strand" evidence="29">
    <location>
        <begin position="276"/>
        <end position="281"/>
    </location>
</feature>
<feature type="strand" evidence="29">
    <location>
        <begin position="283"/>
        <end position="289"/>
    </location>
</feature>
<feature type="helix" evidence="29">
    <location>
        <begin position="294"/>
        <end position="307"/>
    </location>
</feature>
<feature type="strand" evidence="29">
    <location>
        <begin position="312"/>
        <end position="319"/>
    </location>
</feature>
<feature type="helix" evidence="29">
    <location>
        <begin position="321"/>
        <end position="329"/>
    </location>
</feature>
<feature type="turn" evidence="29">
    <location>
        <begin position="330"/>
        <end position="332"/>
    </location>
</feature>
<feature type="helix" evidence="29">
    <location>
        <begin position="335"/>
        <end position="340"/>
    </location>
</feature>
<feature type="strand" evidence="29">
    <location>
        <begin position="343"/>
        <end position="348"/>
    </location>
</feature>
<feature type="helix" evidence="29">
    <location>
        <begin position="351"/>
        <end position="353"/>
    </location>
</feature>
<feature type="helix" evidence="29">
    <location>
        <begin position="356"/>
        <end position="370"/>
    </location>
</feature>
<feature type="strand" evidence="29">
    <location>
        <begin position="373"/>
        <end position="378"/>
    </location>
</feature>
<feature type="helix" evidence="29">
    <location>
        <begin position="380"/>
        <end position="384"/>
    </location>
</feature>
<feature type="helix" evidence="29">
    <location>
        <begin position="389"/>
        <end position="405"/>
    </location>
</feature>
<feature type="strand" evidence="29">
    <location>
        <begin position="409"/>
        <end position="415"/>
    </location>
</feature>
<feature type="strand" evidence="29">
    <location>
        <begin position="419"/>
        <end position="421"/>
    </location>
</feature>
<feature type="helix" evidence="29">
    <location>
        <begin position="431"/>
        <end position="433"/>
    </location>
</feature>
<feature type="strand" evidence="29">
    <location>
        <begin position="435"/>
        <end position="445"/>
    </location>
</feature>
<feature type="strand" evidence="29">
    <location>
        <begin position="448"/>
        <end position="458"/>
    </location>
</feature>
<feature type="strand" evidence="29">
    <location>
        <begin position="468"/>
        <end position="473"/>
    </location>
</feature>
<feature type="strand" evidence="29">
    <location>
        <begin position="476"/>
        <end position="482"/>
    </location>
</feature>
<feature type="helix" evidence="29">
    <location>
        <begin position="489"/>
        <end position="491"/>
    </location>
</feature>
<feature type="helix" evidence="24">
    <location>
        <begin position="506"/>
        <end position="508"/>
    </location>
</feature>
<feature type="helix" evidence="25">
    <location>
        <begin position="512"/>
        <end position="515"/>
    </location>
</feature>
<name>KAIC_THEVB</name>
<protein>
    <recommendedName>
        <fullName evidence="2 10">Circadian clock oscillator protein KaiC</fullName>
        <ecNumber evidence="2 12">2.7.11.1</ecNumber>
        <ecNumber evidence="2 7">3.6.4.-</ecNumber>
    </recommendedName>
</protein>
<gene>
    <name evidence="2 10" type="primary">kaiC</name>
    <name type="ordered locus">tlr0483</name>
</gene>
<accession>Q79V60</accession>
<accession>Q8RR33</accession>
<dbReference type="EC" id="2.7.11.1" evidence="2 12"/>
<dbReference type="EC" id="3.6.4.-" evidence="2 7"/>
<dbReference type="EMBL" id="AB071375">
    <property type="protein sequence ID" value="BAB85985.1"/>
    <property type="molecule type" value="Genomic_DNA"/>
</dbReference>
<dbReference type="EMBL" id="BA000039">
    <property type="protein sequence ID" value="BAC08035.1"/>
    <property type="molecule type" value="Genomic_DNA"/>
</dbReference>
<dbReference type="RefSeq" id="NP_681273.1">
    <property type="nucleotide sequence ID" value="NC_004113.1"/>
</dbReference>
<dbReference type="RefSeq" id="WP_011056334.1">
    <property type="nucleotide sequence ID" value="NC_004113.1"/>
</dbReference>
<dbReference type="PDB" id="1SUY">
    <property type="method" value="NMR"/>
    <property type="chains" value="C/D=488-518"/>
</dbReference>
<dbReference type="PDB" id="1SV1">
    <property type="method" value="NMR"/>
    <property type="chains" value="C/D=488-518"/>
</dbReference>
<dbReference type="PDB" id="4O0M">
    <property type="method" value="X-ray"/>
    <property type="resolution" value="2.84 A"/>
    <property type="chains" value="A/B/C=1-518"/>
</dbReference>
<dbReference type="PDB" id="5JWO">
    <property type="method" value="X-ray"/>
    <property type="resolution" value="1.80 A"/>
    <property type="chains" value="A=17-247"/>
</dbReference>
<dbReference type="PDB" id="5JWQ">
    <property type="method" value="X-ray"/>
    <property type="resolution" value="3.87 A"/>
    <property type="chains" value="A/C=1-518"/>
</dbReference>
<dbReference type="PDB" id="5JWR">
    <property type="method" value="X-ray"/>
    <property type="resolution" value="2.61 A"/>
    <property type="chains" value="A/C=17-247"/>
</dbReference>
<dbReference type="PDB" id="6X61">
    <property type="method" value="X-ray"/>
    <property type="resolution" value="3.20 A"/>
    <property type="chains" value="A/C/E/G/I/K=17-247"/>
</dbReference>
<dbReference type="PDB" id="7DY1">
    <property type="method" value="X-ray"/>
    <property type="resolution" value="2.20 A"/>
    <property type="chains" value="A/B/C/D/E/F=1-518"/>
</dbReference>
<dbReference type="PDBsum" id="1SUY"/>
<dbReference type="PDBsum" id="1SV1"/>
<dbReference type="PDBsum" id="4O0M"/>
<dbReference type="PDBsum" id="5JWO"/>
<dbReference type="PDBsum" id="5JWQ"/>
<dbReference type="PDBsum" id="5JWR"/>
<dbReference type="PDBsum" id="6X61"/>
<dbReference type="PDBsum" id="7DY1"/>
<dbReference type="SMR" id="Q79V60"/>
<dbReference type="DIP" id="DIP-29357N"/>
<dbReference type="IntAct" id="Q79V60">
    <property type="interactions" value="2"/>
</dbReference>
<dbReference type="MINT" id="Q79V60"/>
<dbReference type="STRING" id="197221.gene:10747072"/>
<dbReference type="iPTMnet" id="Q79V60"/>
<dbReference type="EnsemblBacteria" id="BAC08035">
    <property type="protein sequence ID" value="BAC08035"/>
    <property type="gene ID" value="BAC08035"/>
</dbReference>
<dbReference type="KEGG" id="tel:tlr0483"/>
<dbReference type="PATRIC" id="fig|197221.4.peg.508"/>
<dbReference type="eggNOG" id="COG0467">
    <property type="taxonomic scope" value="Bacteria"/>
</dbReference>
<dbReference type="EvolutionaryTrace" id="Q79V60"/>
<dbReference type="Proteomes" id="UP000000440">
    <property type="component" value="Chromosome"/>
</dbReference>
<dbReference type="GO" id="GO:0005524">
    <property type="term" value="F:ATP binding"/>
    <property type="evidence" value="ECO:0007669"/>
    <property type="project" value="UniProtKB-UniRule"/>
</dbReference>
<dbReference type="GO" id="GO:0016887">
    <property type="term" value="F:ATP hydrolysis activity"/>
    <property type="evidence" value="ECO:0007669"/>
    <property type="project" value="RHEA"/>
</dbReference>
<dbReference type="GO" id="GO:0003677">
    <property type="term" value="F:DNA binding"/>
    <property type="evidence" value="ECO:0007669"/>
    <property type="project" value="InterPro"/>
</dbReference>
<dbReference type="GO" id="GO:0042802">
    <property type="term" value="F:identical protein binding"/>
    <property type="evidence" value="ECO:0000353"/>
    <property type="project" value="IntAct"/>
</dbReference>
<dbReference type="GO" id="GO:0016301">
    <property type="term" value="F:kinase activity"/>
    <property type="evidence" value="ECO:0000314"/>
    <property type="project" value="UniProtKB"/>
</dbReference>
<dbReference type="GO" id="GO:0000287">
    <property type="term" value="F:magnesium ion binding"/>
    <property type="evidence" value="ECO:0007669"/>
    <property type="project" value="UniProtKB-UniRule"/>
</dbReference>
<dbReference type="GO" id="GO:0106310">
    <property type="term" value="F:protein serine kinase activity"/>
    <property type="evidence" value="ECO:0007669"/>
    <property type="project" value="RHEA"/>
</dbReference>
<dbReference type="GO" id="GO:0004674">
    <property type="term" value="F:protein serine/threonine kinase activity"/>
    <property type="evidence" value="ECO:0007669"/>
    <property type="project" value="UniProtKB-KW"/>
</dbReference>
<dbReference type="GO" id="GO:0004712">
    <property type="term" value="F:protein serine/threonine/tyrosine kinase activity"/>
    <property type="evidence" value="ECO:0007669"/>
    <property type="project" value="UniProtKB-UniRule"/>
</dbReference>
<dbReference type="GO" id="GO:0007623">
    <property type="term" value="P:circadian rhythm"/>
    <property type="evidence" value="ECO:0000304"/>
    <property type="project" value="UniProtKB"/>
</dbReference>
<dbReference type="GO" id="GO:0046777">
    <property type="term" value="P:protein autophosphorylation"/>
    <property type="evidence" value="ECO:0000314"/>
    <property type="project" value="UniProtKB"/>
</dbReference>
<dbReference type="GO" id="GO:0042752">
    <property type="term" value="P:regulation of circadian rhythm"/>
    <property type="evidence" value="ECO:0007669"/>
    <property type="project" value="InterPro"/>
</dbReference>
<dbReference type="GO" id="GO:0006355">
    <property type="term" value="P:regulation of DNA-templated transcription"/>
    <property type="evidence" value="ECO:0007669"/>
    <property type="project" value="InterPro"/>
</dbReference>
<dbReference type="CDD" id="cd19485">
    <property type="entry name" value="KaiC-N"/>
    <property type="match status" value="1"/>
</dbReference>
<dbReference type="CDD" id="cd19484">
    <property type="entry name" value="KaiC_C"/>
    <property type="match status" value="1"/>
</dbReference>
<dbReference type="FunFam" id="3.40.50.300:FF:001364">
    <property type="entry name" value="Circadian clock protein kinase KaiC"/>
    <property type="match status" value="1"/>
</dbReference>
<dbReference type="Gene3D" id="3.40.50.300">
    <property type="entry name" value="P-loop containing nucleotide triphosphate hydrolases"/>
    <property type="match status" value="2"/>
</dbReference>
<dbReference type="HAMAP" id="MF_01836">
    <property type="entry name" value="KaiC"/>
    <property type="match status" value="1"/>
</dbReference>
<dbReference type="InterPro" id="IPR051347">
    <property type="entry name" value="Circadian_clock_KaiC-rel"/>
</dbReference>
<dbReference type="InterPro" id="IPR013503">
    <property type="entry name" value="Circadian_KaiC_bact"/>
</dbReference>
<dbReference type="InterPro" id="IPR030665">
    <property type="entry name" value="KaiC"/>
</dbReference>
<dbReference type="InterPro" id="IPR014774">
    <property type="entry name" value="KaiC-like_dom"/>
</dbReference>
<dbReference type="InterPro" id="IPR047222">
    <property type="entry name" value="KaiC_C"/>
</dbReference>
<dbReference type="InterPro" id="IPR010624">
    <property type="entry name" value="KaiC_dom"/>
</dbReference>
<dbReference type="InterPro" id="IPR047221">
    <property type="entry name" value="KaiC_N"/>
</dbReference>
<dbReference type="InterPro" id="IPR027417">
    <property type="entry name" value="P-loop_NTPase"/>
</dbReference>
<dbReference type="NCBIfam" id="TIGR02655">
    <property type="entry name" value="circ_KaiC"/>
    <property type="match status" value="1"/>
</dbReference>
<dbReference type="NCBIfam" id="NF006799">
    <property type="entry name" value="PRK09302.1"/>
    <property type="match status" value="1"/>
</dbReference>
<dbReference type="PANTHER" id="PTHR42926">
    <property type="match status" value="1"/>
</dbReference>
<dbReference type="PANTHER" id="PTHR42926:SF1">
    <property type="entry name" value="CIRCADIAN CLOCK OSCILLATOR PROTEIN KAIC 1"/>
    <property type="match status" value="1"/>
</dbReference>
<dbReference type="Pfam" id="PF06745">
    <property type="entry name" value="ATPase"/>
    <property type="match status" value="2"/>
</dbReference>
<dbReference type="PIRSF" id="PIRSF039117">
    <property type="entry name" value="KaiC"/>
    <property type="match status" value="1"/>
</dbReference>
<dbReference type="SUPFAM" id="SSF52540">
    <property type="entry name" value="P-loop containing nucleoside triphosphate hydrolases"/>
    <property type="match status" value="2"/>
</dbReference>
<dbReference type="PROSITE" id="PS51146">
    <property type="entry name" value="KAIC"/>
    <property type="match status" value="2"/>
</dbReference>
<proteinExistence type="evidence at protein level"/>
<comment type="function">
    <text evidence="2">Central component of the KaiABC oscillator complex, which constitutes the main circadian regulator in cyanobacteria. Complex composition changes during the circadian cycle to control KaiC phosphorylation. KaiA stimulates KaiC autophosphorylation, while KaiB sequesters KaiA, leading to KaiC autodephosphorylation. Clock output pathways impact the RpaA transcriptional regulator. KaiC enhances the autophosphorylation activity of SasA, which then transfers its phosphate group to RpaA to activate it. KaiB and KaiC together enhance the phospho-RpaA dephosphatase activity of CikA.</text>
</comment>
<comment type="function">
    <text evidence="4 5 7">Stimulates SasA autophosphorylation. Fully phosphorylated KaiC (tested with phosphomimetic Asp-431-432-Asp) is the best stimulant, requires the ATPase activity of the CII domain. Unphosphorylated SasA associates with KaiC and its autophosphorylation activity is enhanced. Phospho-SasA is released and associates with RpaA, transferring its phosphate group (PubMed:22512339). Formation of the KaiA:KaiB complex is promoted by KaiC, helping switch KaiC from its autophosphorylation to autodephosphatase function (PubMed:24112939, PubMed:28302851).</text>
</comment>
<comment type="function">
    <text evidence="7 8 9">Has a weak, temperature-independent ATPase activity (about 14 molecules of ATP per day) that defines the circadian period (PubMed:28302851, PubMed:34618577). ATPase activity is mostly contributed by the CI domain; the CII domain augments the activity. The addition of KaiA increases activity. ATPase is inhibited during the KaiC phosphorylating phase and activated during the KaiC dephosphorylating phase (PubMed:35507871).</text>
</comment>
<comment type="catalytic activity">
    <reaction evidence="2 12">
        <text>L-seryl-[protein] + ATP = O-phospho-L-seryl-[protein] + ADP + H(+)</text>
        <dbReference type="Rhea" id="RHEA:17989"/>
        <dbReference type="Rhea" id="RHEA-COMP:9863"/>
        <dbReference type="Rhea" id="RHEA-COMP:11604"/>
        <dbReference type="ChEBI" id="CHEBI:15378"/>
        <dbReference type="ChEBI" id="CHEBI:29999"/>
        <dbReference type="ChEBI" id="CHEBI:30616"/>
        <dbReference type="ChEBI" id="CHEBI:83421"/>
        <dbReference type="ChEBI" id="CHEBI:456216"/>
        <dbReference type="EC" id="2.7.11.1"/>
    </reaction>
</comment>
<comment type="catalytic activity">
    <reaction evidence="2 12">
        <text>L-threonyl-[protein] + ATP = O-phospho-L-threonyl-[protein] + ADP + H(+)</text>
        <dbReference type="Rhea" id="RHEA:46608"/>
        <dbReference type="Rhea" id="RHEA-COMP:11060"/>
        <dbReference type="Rhea" id="RHEA-COMP:11605"/>
        <dbReference type="ChEBI" id="CHEBI:15378"/>
        <dbReference type="ChEBI" id="CHEBI:30013"/>
        <dbReference type="ChEBI" id="CHEBI:30616"/>
        <dbReference type="ChEBI" id="CHEBI:61977"/>
        <dbReference type="ChEBI" id="CHEBI:456216"/>
        <dbReference type="EC" id="2.7.11.1"/>
    </reaction>
</comment>
<comment type="catalytic activity">
    <reaction evidence="2">
        <text>ATP + H2O = ADP + phosphate + H(+)</text>
        <dbReference type="Rhea" id="RHEA:13065"/>
        <dbReference type="ChEBI" id="CHEBI:15377"/>
        <dbReference type="ChEBI" id="CHEBI:15378"/>
        <dbReference type="ChEBI" id="CHEBI:30616"/>
        <dbReference type="ChEBI" id="CHEBI:43474"/>
        <dbReference type="ChEBI" id="CHEBI:456216"/>
    </reaction>
</comment>
<comment type="cofactor">
    <cofactor evidence="2">
        <name>Mg(2+)</name>
        <dbReference type="ChEBI" id="CHEBI:18420"/>
    </cofactor>
    <text evidence="2">Binds 2 Mg(2+) ions per subunit, one in each domain. Mg(2+) is required for hexamerization and phosphatase activity.</text>
</comment>
<comment type="activity regulation">
    <text evidence="2">The interaction with KaiA enhances its phosphorylation status, while the interaction with KaiB decreases it.</text>
</comment>
<comment type="biophysicochemical properties">
    <kinetics>
        <KM evidence="3">1.9 uM for ATP during hexamerization</KM>
    </kinetics>
</comment>
<comment type="subunit">
    <text evidence="3 4 5 6 7 8 9">Homohexamer resembling 2 stacked donuts rings with a central pore nearly blocked on one side; hexamerization is dependent on ATP-binding. Binds 2 ATP per monomer, at the subunit interface on each ring (PubMed:12622725, PubMed:28302851, PubMed:35507871). The KaiABC complex composition changes during the circadian cycle to control KaiC phosphorylation. Complexes KaiC(6), KaiA(2-4):KaiC(6), KaiB(6):KaiC(6) and KaiC(6):KaiB(6):KaiA(12) are among the most important forms, many form cooperatively (PubMed:28302851, PubMed:34618577, PubMed:35507871). Interacts with SasA, probably as 1 SasA trimer:1 KaiC homohexamer, has highest affinity for unphosphorylated SasA (PubMed:22512339). The CI domain binds to KaiB and SasA; as they have a similar fold they compete for the same site on CI (PubMed:24112939, PubMed:28302851, PubMed:34618577). KaiB assumes a thioredoxin-like form called KaiB(fs) when bound to KaiC (PubMed:26113641, PubMed:28302851).</text>
</comment>
<comment type="interaction">
    <interactant intactId="EBI-701595">
        <id>Q79V60</id>
    </interactant>
    <interactant intactId="EBI-701584">
        <id>Q79V62</id>
        <label>kaiA</label>
    </interactant>
    <organismsDiffer>false</organismsDiffer>
    <experiments>12</experiments>
</comment>
<comment type="interaction">
    <interactant intactId="EBI-701595">
        <id>Q79V60</id>
    </interactant>
    <interactant intactId="EBI-7570699">
        <id>Q79V61</id>
        <label>kaiB</label>
    </interactant>
    <organismsDiffer>false</organismsDiffer>
    <experiments>6</experiments>
</comment>
<comment type="interaction">
    <interactant intactId="EBI-701595">
        <id>Q79V60</id>
    </interactant>
    <interactant intactId="EBI-701595">
        <id>Q79V60</id>
        <label>kaiC</label>
    </interactant>
    <organismsDiffer>false</organismsDiffer>
    <experiments>8</experiments>
</comment>
<comment type="domain">
    <text evidence="4 5 6 7 9">In the homohexamer the 2 domains (called CI and CII) self-associate to each form a 'donut' layer (PubMed:26113641, PubMed:35507871). The KaiC CI domain mediates interaction with KaiB, CikA and SasA (PubMed:22512339, PubMed:24112939, PubMed:28302851). ATP hydrolysis by the CI domain causes a conformational change that allows KaiB binding (PubMed:28302851). The 2 domains communicate to control ATPase activity (PubMed:35507871).</text>
</comment>
<comment type="domain">
    <text evidence="2">In the homohexamer the 2 domains (called CI and CII) self-associate to each form a 'donut' layer; the compactness and local conformation of the domains varies over the cell cycle and impacts function. CII has the autokinase and autophosphatase activities, both CI and CII have (weak) ATPase activity; CI has the clock pacemaker role.</text>
</comment>
<comment type="PTM">
    <text evidence="5 8 9">Phosphorylated on serine/threonine residues by autocatalysis. Both phosphorylated and unphosphorylated forms exist. Both autophosphorylates and autodephosphorylates. Phosphorylated form correlates with clock speed.</text>
</comment>
<comment type="PTM">
    <text evidence="2">Phosphorylated on serine and threonine residues by autocatalysis. Has a 4 step phosphorylation cycle; the autokinase acts first on Thr-432, then Ser-431. When Ser-431 is modified KaiC switches to an autophosphatase mode, acting first on phospho-Thr-432 then phospho-Ser-431.</text>
</comment>
<comment type="similarity">
    <text evidence="2 11">Belongs to the KaiC family.</text>
</comment>
<sequence>MTNLPEHQSSPTEQSSAEVKKIPTMIEGFDDISHGGLPQGRTTLVSGTSGTGKTLFAVQFLYNGITIFNEPGIFVTFEESPQDIIKNALSFGWNLQSLIDQGKLFILDASPDPDGQEVAGDFDLSALIERIQYAIRKYKATRVSIDSVTAVFQQYDAASVVRREIFRLAFRLKQLGVTTIMTTERVDEYGPVARFGVEEFVSDNVVILRNVLEGERRRRTVEILKLRGTTHMKGEYPFTINNGINIFPLGAMRLTQRSSNVRVSSGVKTLDEMCGGGFFKDSIILATGATGTGKTLLVSKFLETGCQQGERALLFAYEESRAQLSRNASSWGIDFEELERRGLLRIICAYPESAGLEDHLQIIKSEIADFKPSRVAIDSLSALARGVSNNAFRQFVIGVTGFAKQEEITGFFTNTTDQFMGSNSITESHISTITDTILLLQYVEIRGEMSRAINVFKMRGSWHDKGIREYVITEKGAEIRDSFRNFEGIISGTPTRISVDEKTELARIAKGMQDLESE</sequence>
<organism>
    <name type="scientific">Thermosynechococcus vestitus (strain NIES-2133 / IAM M-273 / BP-1)</name>
    <dbReference type="NCBI Taxonomy" id="197221"/>
    <lineage>
        <taxon>Bacteria</taxon>
        <taxon>Bacillati</taxon>
        <taxon>Cyanobacteriota</taxon>
        <taxon>Cyanophyceae</taxon>
        <taxon>Acaryochloridales</taxon>
        <taxon>Thermosynechococcaceae</taxon>
        <taxon>Thermosynechococcus</taxon>
    </lineage>
</organism>